<dbReference type="EC" id="3.4.-.-" evidence="6"/>
<dbReference type="EMBL" id="CR380959">
    <property type="protein sequence ID" value="CAG62405.1"/>
    <property type="molecule type" value="Genomic_DNA"/>
</dbReference>
<dbReference type="RefSeq" id="XP_449429.1">
    <property type="nucleotide sequence ID" value="XM_449429.1"/>
</dbReference>
<dbReference type="SMR" id="Q6FK15"/>
<dbReference type="FunCoup" id="Q6FK15">
    <property type="interactions" value="17"/>
</dbReference>
<dbReference type="STRING" id="284593.Q6FK15"/>
<dbReference type="MEROPS" id="M28.A05"/>
<dbReference type="EnsemblFungi" id="CAGL0M01936g-T">
    <property type="protein sequence ID" value="CAGL0M01936g-T-p1"/>
    <property type="gene ID" value="CAGL0M01936g"/>
</dbReference>
<dbReference type="KEGG" id="cgr:2891755"/>
<dbReference type="CGD" id="CAL0136615">
    <property type="gene designation" value="CAGL0M01936g"/>
</dbReference>
<dbReference type="VEuPathDB" id="FungiDB:CAGL0M01936g"/>
<dbReference type="eggNOG" id="KOG2194">
    <property type="taxonomic scope" value="Eukaryota"/>
</dbReference>
<dbReference type="HOGENOM" id="CLU_006412_1_0_1"/>
<dbReference type="InParanoid" id="Q6FK15"/>
<dbReference type="OMA" id="TPWPVTI"/>
<dbReference type="Proteomes" id="UP000002428">
    <property type="component" value="Chromosome M"/>
</dbReference>
<dbReference type="GO" id="GO:0000329">
    <property type="term" value="C:fungal-type vacuole membrane"/>
    <property type="evidence" value="ECO:0007669"/>
    <property type="project" value="EnsemblFungi"/>
</dbReference>
<dbReference type="GO" id="GO:0046872">
    <property type="term" value="F:metal ion binding"/>
    <property type="evidence" value="ECO:0007669"/>
    <property type="project" value="UniProtKB-KW"/>
</dbReference>
<dbReference type="GO" id="GO:0008235">
    <property type="term" value="F:metalloexopeptidase activity"/>
    <property type="evidence" value="ECO:0007669"/>
    <property type="project" value="InterPro"/>
</dbReference>
<dbReference type="GO" id="GO:0006508">
    <property type="term" value="P:proteolysis"/>
    <property type="evidence" value="ECO:0007669"/>
    <property type="project" value="UniProtKB-KW"/>
</dbReference>
<dbReference type="CDD" id="cd03875">
    <property type="entry name" value="M28_Fxna_like"/>
    <property type="match status" value="1"/>
</dbReference>
<dbReference type="Gene3D" id="3.40.630.10">
    <property type="entry name" value="Zn peptidases"/>
    <property type="match status" value="1"/>
</dbReference>
<dbReference type="InterPro" id="IPR048024">
    <property type="entry name" value="Fxna-like_M28_dom"/>
</dbReference>
<dbReference type="InterPro" id="IPR045175">
    <property type="entry name" value="M28_fam"/>
</dbReference>
<dbReference type="InterPro" id="IPR007484">
    <property type="entry name" value="Peptidase_M28"/>
</dbReference>
<dbReference type="InterPro" id="IPR053975">
    <property type="entry name" value="PFF1_C"/>
</dbReference>
<dbReference type="InterPro" id="IPR053976">
    <property type="entry name" value="PFF1_TM"/>
</dbReference>
<dbReference type="PANTHER" id="PTHR12147">
    <property type="entry name" value="METALLOPEPTIDASE M28 FAMILY MEMBER"/>
    <property type="match status" value="1"/>
</dbReference>
<dbReference type="PANTHER" id="PTHR12147:SF58">
    <property type="entry name" value="VACUOLAR MEMBRANE PROTEASE"/>
    <property type="match status" value="1"/>
</dbReference>
<dbReference type="Pfam" id="PF04389">
    <property type="entry name" value="Peptidase_M28"/>
    <property type="match status" value="1"/>
</dbReference>
<dbReference type="Pfam" id="PF22250">
    <property type="entry name" value="PFF1_C"/>
    <property type="match status" value="1"/>
</dbReference>
<dbReference type="Pfam" id="PF22251">
    <property type="entry name" value="PFF1_TM"/>
    <property type="match status" value="1"/>
</dbReference>
<dbReference type="SUPFAM" id="SSF53187">
    <property type="entry name" value="Zn-dependent exopeptidases"/>
    <property type="match status" value="1"/>
</dbReference>
<organism>
    <name type="scientific">Candida glabrata (strain ATCC 2001 / BCRC 20586 / JCM 3761 / NBRC 0622 / NRRL Y-65 / CBS 138)</name>
    <name type="common">Yeast</name>
    <name type="synonym">Nakaseomyces glabratus</name>
    <dbReference type="NCBI Taxonomy" id="284593"/>
    <lineage>
        <taxon>Eukaryota</taxon>
        <taxon>Fungi</taxon>
        <taxon>Dikarya</taxon>
        <taxon>Ascomycota</taxon>
        <taxon>Saccharomycotina</taxon>
        <taxon>Saccharomycetes</taxon>
        <taxon>Saccharomycetales</taxon>
        <taxon>Saccharomycetaceae</taxon>
        <taxon>Nakaseomyces</taxon>
    </lineage>
</organism>
<proteinExistence type="inferred from homology"/>
<comment type="function">
    <text evidence="1">May be involved in vacuolar sorting and osmoregulation.</text>
</comment>
<comment type="cofactor">
    <cofactor evidence="2">
        <name>Zn(2+)</name>
        <dbReference type="ChEBI" id="CHEBI:29105"/>
    </cofactor>
    <text evidence="2">Binds 2 Zn(2+) ions per subunit.</text>
</comment>
<comment type="subcellular location">
    <subcellularLocation>
        <location evidence="1">Vacuole membrane</location>
        <topology evidence="3">Multi-pass membrane protein</topology>
    </subcellularLocation>
</comment>
<comment type="similarity">
    <text evidence="6">Belongs to the peptidase M28 family.</text>
</comment>
<gene>
    <name type="ordered locus">CAGL0M01936g</name>
</gene>
<protein>
    <recommendedName>
        <fullName evidence="1">Vacuolar membrane protease</fullName>
        <ecNumber evidence="6">3.4.-.-</ecNumber>
    </recommendedName>
    <alternativeName>
        <fullName evidence="1">FXNA-related family protease 1</fullName>
    </alternativeName>
</protein>
<reference key="1">
    <citation type="journal article" date="2004" name="Nature">
        <title>Genome evolution in yeasts.</title>
        <authorList>
            <person name="Dujon B."/>
            <person name="Sherman D."/>
            <person name="Fischer G."/>
            <person name="Durrens P."/>
            <person name="Casaregola S."/>
            <person name="Lafontaine I."/>
            <person name="de Montigny J."/>
            <person name="Marck C."/>
            <person name="Neuveglise C."/>
            <person name="Talla E."/>
            <person name="Goffard N."/>
            <person name="Frangeul L."/>
            <person name="Aigle M."/>
            <person name="Anthouard V."/>
            <person name="Babour A."/>
            <person name="Barbe V."/>
            <person name="Barnay S."/>
            <person name="Blanchin S."/>
            <person name="Beckerich J.-M."/>
            <person name="Beyne E."/>
            <person name="Bleykasten C."/>
            <person name="Boisrame A."/>
            <person name="Boyer J."/>
            <person name="Cattolico L."/>
            <person name="Confanioleri F."/>
            <person name="de Daruvar A."/>
            <person name="Despons L."/>
            <person name="Fabre E."/>
            <person name="Fairhead C."/>
            <person name="Ferry-Dumazet H."/>
            <person name="Groppi A."/>
            <person name="Hantraye F."/>
            <person name="Hennequin C."/>
            <person name="Jauniaux N."/>
            <person name="Joyet P."/>
            <person name="Kachouri R."/>
            <person name="Kerrest A."/>
            <person name="Koszul R."/>
            <person name="Lemaire M."/>
            <person name="Lesur I."/>
            <person name="Ma L."/>
            <person name="Muller H."/>
            <person name="Nicaud J.-M."/>
            <person name="Nikolski M."/>
            <person name="Oztas S."/>
            <person name="Ozier-Kalogeropoulos O."/>
            <person name="Pellenz S."/>
            <person name="Potier S."/>
            <person name="Richard G.-F."/>
            <person name="Straub M.-L."/>
            <person name="Suleau A."/>
            <person name="Swennen D."/>
            <person name="Tekaia F."/>
            <person name="Wesolowski-Louvel M."/>
            <person name="Westhof E."/>
            <person name="Wirth B."/>
            <person name="Zeniou-Meyer M."/>
            <person name="Zivanovic Y."/>
            <person name="Bolotin-Fukuhara M."/>
            <person name="Thierry A."/>
            <person name="Bouchier C."/>
            <person name="Caudron B."/>
            <person name="Scarpelli C."/>
            <person name="Gaillardin C."/>
            <person name="Weissenbach J."/>
            <person name="Wincker P."/>
            <person name="Souciet J.-L."/>
        </authorList>
    </citation>
    <scope>NUCLEOTIDE SEQUENCE [LARGE SCALE GENOMIC DNA]</scope>
    <source>
        <strain>ATCC 2001 / BCRC 20586 / JCM 3761 / NBRC 0622 / NRRL Y-65 / CBS 138</strain>
    </source>
</reference>
<sequence>MRFKALLRAIFRFRKTNFSILLIITYAIIIALLVFDRSRYKLDLPNATSDKLRRNLLEQAWSDLQVITQSPHPYSSRNNDVVHDFLLQRVKNITRSNDNIYIDDDYRNKSSILFHQPDVFNSTSKVSRVVYYESSNIIVKVVGSNNELPALLISGHFDSVPTSYGATDDGKGIATMLSLLNHFSSSQPKRSVIFNFNNNEEFGLLGAYAFTYHPWIRDIEYFINLEGMGAGDRAVLFRTSNVETAEIYKKAVKSRPFGNSIFQQGFNSRYIGSQTDYKVYDEYGLKGWDISFYKPRDYYHTAKDSIQYTSKESLWSMLNQSLQLAIYISNEKLIKKSSSNPAVFFDLLGLFFVVVDTKHLFYADIFMLIVGPILLMMKAHLDKRRRLERSRLVQLRLLLSLGLSVVFLLLLTKSLNSFNPFVYSADYRTPLTGLFLLFVTVNYLIVTLAERLNPTESYKTVAINQIFIIAWLMQLYITLRMAKSDFTLTGTYPLSIFSGCLIVALSLGLFGTKNKAVNDAPNSSVRYASSQNDEDNPLPSQDRGENINQVRDTGNQEVTSNTNTDLHSNAEEVDERMPLLSNNHIGDSGKMDKNSDFSKHYNWIVQFLCIVPISSFIFLFSLDYTLDAIHKMVQETTDDVQLICIIITIGVILLALPILPFISKLNYQSSVIIAIIGVLLFGKSLVMQPFSEIAPLKVRFLQTVNQHDISKSSVSLFTAKDTPIKEMIYDLPSVKSQSTLVNCTVFGGSKICDYYGLPPNLVDSEGNRQNKNLMKIEVLKNDNNDTQRSPYAPLSAEIKINVSENRVCSLAFWSQSSKQSPVKKFSVIKSNNNNTNSVSNSIKYADGIDEVLIHKLDFNGAHHFSIEWLPNIPFDLDYDPVIDGQGDNNIEITVACFTGEADSLSVVNGHPLKKIPAFDEVVKYSPKWYTFTNRDRGLVVIKDKIQL</sequence>
<feature type="chain" id="PRO_0000411708" description="Vacuolar membrane protease">
    <location>
        <begin position="1"/>
        <end position="947"/>
    </location>
</feature>
<feature type="topological domain" description="Cytoplasmic" evidence="1">
    <location>
        <begin position="1"/>
        <end position="15"/>
    </location>
</feature>
<feature type="transmembrane region" description="Helical; Name=1" evidence="3">
    <location>
        <begin position="16"/>
        <end position="36"/>
    </location>
</feature>
<feature type="topological domain" description="Vacuolar" evidence="1">
    <location>
        <begin position="37"/>
        <end position="358"/>
    </location>
</feature>
<feature type="transmembrane region" description="Helical; Name=2" evidence="3">
    <location>
        <begin position="359"/>
        <end position="379"/>
    </location>
</feature>
<feature type="topological domain" description="Cytoplasmic" evidence="1">
    <location>
        <begin position="380"/>
        <end position="391"/>
    </location>
</feature>
<feature type="transmembrane region" description="Helical; Name=3" evidence="3">
    <location>
        <begin position="392"/>
        <end position="412"/>
    </location>
</feature>
<feature type="topological domain" description="Vacuolar" evidence="1">
    <location>
        <begin position="413"/>
        <end position="428"/>
    </location>
</feature>
<feature type="transmembrane region" description="Helical; Name=4" evidence="3">
    <location>
        <begin position="429"/>
        <end position="449"/>
    </location>
</feature>
<feature type="topological domain" description="Cytoplasmic" evidence="1">
    <location>
        <begin position="450"/>
        <end position="458"/>
    </location>
</feature>
<feature type="transmembrane region" description="Helical; Name=5" evidence="3">
    <location>
        <begin position="459"/>
        <end position="479"/>
    </location>
</feature>
<feature type="topological domain" description="Vacuolar" evidence="1">
    <location>
        <begin position="480"/>
        <end position="489"/>
    </location>
</feature>
<feature type="transmembrane region" description="Helical; Name=6" evidence="3">
    <location>
        <begin position="490"/>
        <end position="510"/>
    </location>
</feature>
<feature type="topological domain" description="Cytoplasmic" evidence="1">
    <location>
        <begin position="511"/>
        <end position="601"/>
    </location>
</feature>
<feature type="transmembrane region" description="Helical; Name=7" evidence="3">
    <location>
        <begin position="602"/>
        <end position="622"/>
    </location>
</feature>
<feature type="topological domain" description="Vacuolar" evidence="1">
    <location>
        <begin position="623"/>
        <end position="641"/>
    </location>
</feature>
<feature type="transmembrane region" description="Helical; Name=8" evidence="3">
    <location>
        <begin position="642"/>
        <end position="662"/>
    </location>
</feature>
<feature type="topological domain" description="Cytoplasmic" evidence="1">
    <location>
        <begin position="663"/>
        <end position="669"/>
    </location>
</feature>
<feature type="transmembrane region" description="Helical; Name=9" evidence="3">
    <location>
        <begin position="670"/>
        <end position="690"/>
    </location>
</feature>
<feature type="topological domain" description="Vacuolar" evidence="1">
    <location>
        <begin position="691"/>
        <end position="947"/>
    </location>
</feature>
<feature type="region of interest" description="Disordered" evidence="5">
    <location>
        <begin position="522"/>
        <end position="573"/>
    </location>
</feature>
<feature type="compositionally biased region" description="Polar residues" evidence="5">
    <location>
        <begin position="522"/>
        <end position="531"/>
    </location>
</feature>
<feature type="compositionally biased region" description="Polar residues" evidence="5">
    <location>
        <begin position="546"/>
        <end position="567"/>
    </location>
</feature>
<feature type="active site" description="Proton acceptor" evidence="2">
    <location>
        <position position="200"/>
    </location>
</feature>
<feature type="binding site" evidence="2">
    <location>
        <position position="156"/>
    </location>
    <ligand>
        <name>Zn(2+)</name>
        <dbReference type="ChEBI" id="CHEBI:29105"/>
        <label>1</label>
        <note>catalytic</note>
    </ligand>
</feature>
<feature type="binding site" evidence="2">
    <location>
        <position position="168"/>
    </location>
    <ligand>
        <name>Zn(2+)</name>
        <dbReference type="ChEBI" id="CHEBI:29105"/>
        <label>1</label>
        <note>catalytic</note>
    </ligand>
</feature>
<feature type="binding site" evidence="2">
    <location>
        <position position="168"/>
    </location>
    <ligand>
        <name>Zn(2+)</name>
        <dbReference type="ChEBI" id="CHEBI:29105"/>
        <label>2</label>
        <note>catalytic</note>
    </ligand>
</feature>
<feature type="binding site" evidence="2">
    <location>
        <position position="201"/>
    </location>
    <ligand>
        <name>Zn(2+)</name>
        <dbReference type="ChEBI" id="CHEBI:29105"/>
        <label>2</label>
        <note>catalytic</note>
    </ligand>
</feature>
<feature type="binding site" evidence="2">
    <location>
        <position position="226"/>
    </location>
    <ligand>
        <name>Zn(2+)</name>
        <dbReference type="ChEBI" id="CHEBI:29105"/>
        <label>1</label>
        <note>catalytic</note>
    </ligand>
</feature>
<feature type="binding site" evidence="2">
    <location>
        <position position="300"/>
    </location>
    <ligand>
        <name>Zn(2+)</name>
        <dbReference type="ChEBI" id="CHEBI:29105"/>
        <label>2</label>
        <note>catalytic</note>
    </ligand>
</feature>
<feature type="site" description="Transition state stabilizer" evidence="2">
    <location>
        <position position="299"/>
    </location>
</feature>
<feature type="glycosylation site" description="N-linked (GlcNAc...) asparagine" evidence="4">
    <location>
        <position position="46"/>
    </location>
</feature>
<feature type="glycosylation site" description="N-linked (GlcNAc...) asparagine" evidence="4">
    <location>
        <position position="92"/>
    </location>
</feature>
<feature type="glycosylation site" description="N-linked (GlcNAc...) asparagine" evidence="4">
    <location>
        <position position="108"/>
    </location>
</feature>
<feature type="glycosylation site" description="N-linked (GlcNAc...) asparagine" evidence="4">
    <location>
        <position position="121"/>
    </location>
</feature>
<feature type="glycosylation site" description="N-linked (GlcNAc...) asparagine" evidence="4">
    <location>
        <position position="319"/>
    </location>
</feature>
<feature type="glycosylation site" description="N-linked (GlcNAc...) asparagine" evidence="4">
    <location>
        <position position="742"/>
    </location>
</feature>
<feature type="glycosylation site" description="N-linked (GlcNAc...) asparagine" evidence="4">
    <location>
        <position position="784"/>
    </location>
</feature>
<feature type="glycosylation site" description="N-linked (GlcNAc...) asparagine" evidence="4">
    <location>
        <position position="801"/>
    </location>
</feature>
<feature type="glycosylation site" description="N-linked (GlcNAc...) asparagine" evidence="4">
    <location>
        <position position="833"/>
    </location>
</feature>
<name>PFF1_CANGA</name>
<accession>Q6FK15</accession>
<evidence type="ECO:0000250" key="1">
    <source>
        <dbReference type="UniProtKB" id="P38244"/>
    </source>
</evidence>
<evidence type="ECO:0000250" key="2">
    <source>
        <dbReference type="UniProtKB" id="P80561"/>
    </source>
</evidence>
<evidence type="ECO:0000255" key="3"/>
<evidence type="ECO:0000255" key="4">
    <source>
        <dbReference type="PROSITE-ProRule" id="PRU00498"/>
    </source>
</evidence>
<evidence type="ECO:0000256" key="5">
    <source>
        <dbReference type="SAM" id="MobiDB-lite"/>
    </source>
</evidence>
<evidence type="ECO:0000305" key="6"/>
<keyword id="KW-0325">Glycoprotein</keyword>
<keyword id="KW-0378">Hydrolase</keyword>
<keyword id="KW-0472">Membrane</keyword>
<keyword id="KW-0479">Metal-binding</keyword>
<keyword id="KW-0482">Metalloprotease</keyword>
<keyword id="KW-0645">Protease</keyword>
<keyword id="KW-1185">Reference proteome</keyword>
<keyword id="KW-0812">Transmembrane</keyword>
<keyword id="KW-1133">Transmembrane helix</keyword>
<keyword id="KW-0926">Vacuole</keyword>
<keyword id="KW-0862">Zinc</keyword>